<protein>
    <recommendedName>
        <fullName evidence="5">PABIR family member 2</fullName>
    </recommendedName>
</protein>
<evidence type="ECO:0000256" key="1">
    <source>
        <dbReference type="SAM" id="MobiDB-lite"/>
    </source>
</evidence>
<evidence type="ECO:0000303" key="2">
    <source>
    </source>
</evidence>
<evidence type="ECO:0000303" key="3">
    <source>
    </source>
</evidence>
<evidence type="ECO:0000305" key="4"/>
<evidence type="ECO:0000312" key="5">
    <source>
        <dbReference type="HGNC" id="HGNC:30490"/>
    </source>
</evidence>
<evidence type="ECO:0007744" key="6">
    <source>
    </source>
</evidence>
<evidence type="ECO:0007744" key="7">
    <source>
    </source>
</evidence>
<evidence type="ECO:0007744" key="8">
    <source>
    </source>
</evidence>
<evidence type="ECO:0007744" key="9">
    <source>
    </source>
</evidence>
<evidence type="ECO:0007744" key="10">
    <source>
    </source>
</evidence>
<evidence type="ECO:0007744" key="11">
    <source>
    </source>
</evidence>
<evidence type="ECO:0007744" key="12">
    <source>
    </source>
</evidence>
<evidence type="ECO:0007744" key="13">
    <source>
    </source>
</evidence>
<evidence type="ECO:0007744" key="14">
    <source>
    </source>
</evidence>
<name>PBIR2_HUMAN</name>
<accession>Q7Z309</accession>
<accession>A8K902</accession>
<accession>Q6PIM2</accession>
<accession>Q6ZU47</accession>
<accession>Q6ZV64</accession>
<accession>Q6ZVE4</accession>
<accession>Q8TB75</accession>
<organism>
    <name type="scientific">Homo sapiens</name>
    <name type="common">Human</name>
    <dbReference type="NCBI Taxonomy" id="9606"/>
    <lineage>
        <taxon>Eukaryota</taxon>
        <taxon>Metazoa</taxon>
        <taxon>Chordata</taxon>
        <taxon>Craniata</taxon>
        <taxon>Vertebrata</taxon>
        <taxon>Euteleostomi</taxon>
        <taxon>Mammalia</taxon>
        <taxon>Eutheria</taxon>
        <taxon>Euarchontoglires</taxon>
        <taxon>Primates</taxon>
        <taxon>Haplorrhini</taxon>
        <taxon>Catarrhini</taxon>
        <taxon>Hominidae</taxon>
        <taxon>Homo</taxon>
    </lineage>
</organism>
<reference key="1">
    <citation type="journal article" date="2004" name="Nat. Genet.">
        <title>Complete sequencing and characterization of 21,243 full-length human cDNAs.</title>
        <authorList>
            <person name="Ota T."/>
            <person name="Suzuki Y."/>
            <person name="Nishikawa T."/>
            <person name="Otsuki T."/>
            <person name="Sugiyama T."/>
            <person name="Irie R."/>
            <person name="Wakamatsu A."/>
            <person name="Hayashi K."/>
            <person name="Sato H."/>
            <person name="Nagai K."/>
            <person name="Kimura K."/>
            <person name="Makita H."/>
            <person name="Sekine M."/>
            <person name="Obayashi M."/>
            <person name="Nishi T."/>
            <person name="Shibahara T."/>
            <person name="Tanaka T."/>
            <person name="Ishii S."/>
            <person name="Yamamoto J."/>
            <person name="Saito K."/>
            <person name="Kawai Y."/>
            <person name="Isono Y."/>
            <person name="Nakamura Y."/>
            <person name="Nagahari K."/>
            <person name="Murakami K."/>
            <person name="Yasuda T."/>
            <person name="Iwayanagi T."/>
            <person name="Wagatsuma M."/>
            <person name="Shiratori A."/>
            <person name="Sudo H."/>
            <person name="Hosoiri T."/>
            <person name="Kaku Y."/>
            <person name="Kodaira H."/>
            <person name="Kondo H."/>
            <person name="Sugawara M."/>
            <person name="Takahashi M."/>
            <person name="Kanda K."/>
            <person name="Yokoi T."/>
            <person name="Furuya T."/>
            <person name="Kikkawa E."/>
            <person name="Omura Y."/>
            <person name="Abe K."/>
            <person name="Kamihara K."/>
            <person name="Katsuta N."/>
            <person name="Sato K."/>
            <person name="Tanikawa M."/>
            <person name="Yamazaki M."/>
            <person name="Ninomiya K."/>
            <person name="Ishibashi T."/>
            <person name="Yamashita H."/>
            <person name="Murakawa K."/>
            <person name="Fujimori K."/>
            <person name="Tanai H."/>
            <person name="Kimata M."/>
            <person name="Watanabe M."/>
            <person name="Hiraoka S."/>
            <person name="Chiba Y."/>
            <person name="Ishida S."/>
            <person name="Ono Y."/>
            <person name="Takiguchi S."/>
            <person name="Watanabe S."/>
            <person name="Yosida M."/>
            <person name="Hotuta T."/>
            <person name="Kusano J."/>
            <person name="Kanehori K."/>
            <person name="Takahashi-Fujii A."/>
            <person name="Hara H."/>
            <person name="Tanase T.-O."/>
            <person name="Nomura Y."/>
            <person name="Togiya S."/>
            <person name="Komai F."/>
            <person name="Hara R."/>
            <person name="Takeuchi K."/>
            <person name="Arita M."/>
            <person name="Imose N."/>
            <person name="Musashino K."/>
            <person name="Yuuki H."/>
            <person name="Oshima A."/>
            <person name="Sasaki N."/>
            <person name="Aotsuka S."/>
            <person name="Yoshikawa Y."/>
            <person name="Matsunawa H."/>
            <person name="Ichihara T."/>
            <person name="Shiohata N."/>
            <person name="Sano S."/>
            <person name="Moriya S."/>
            <person name="Momiyama H."/>
            <person name="Satoh N."/>
            <person name="Takami S."/>
            <person name="Terashima Y."/>
            <person name="Suzuki O."/>
            <person name="Nakagawa S."/>
            <person name="Senoh A."/>
            <person name="Mizoguchi H."/>
            <person name="Goto Y."/>
            <person name="Shimizu F."/>
            <person name="Wakebe H."/>
            <person name="Hishigaki H."/>
            <person name="Watanabe T."/>
            <person name="Sugiyama A."/>
            <person name="Takemoto M."/>
            <person name="Kawakami B."/>
            <person name="Yamazaki M."/>
            <person name="Watanabe K."/>
            <person name="Kumagai A."/>
            <person name="Itakura S."/>
            <person name="Fukuzumi Y."/>
            <person name="Fujimori Y."/>
            <person name="Komiyama M."/>
            <person name="Tashiro H."/>
            <person name="Tanigami A."/>
            <person name="Fujiwara T."/>
            <person name="Ono T."/>
            <person name="Yamada K."/>
            <person name="Fujii Y."/>
            <person name="Ozaki K."/>
            <person name="Hirao M."/>
            <person name="Ohmori Y."/>
            <person name="Kawabata A."/>
            <person name="Hikiji T."/>
            <person name="Kobatake N."/>
            <person name="Inagaki H."/>
            <person name="Ikema Y."/>
            <person name="Okamoto S."/>
            <person name="Okitani R."/>
            <person name="Kawakami T."/>
            <person name="Noguchi S."/>
            <person name="Itoh T."/>
            <person name="Shigeta K."/>
            <person name="Senba T."/>
            <person name="Matsumura K."/>
            <person name="Nakajima Y."/>
            <person name="Mizuno T."/>
            <person name="Morinaga M."/>
            <person name="Sasaki M."/>
            <person name="Togashi T."/>
            <person name="Oyama M."/>
            <person name="Hata H."/>
            <person name="Watanabe M."/>
            <person name="Komatsu T."/>
            <person name="Mizushima-Sugano J."/>
            <person name="Satoh T."/>
            <person name="Shirai Y."/>
            <person name="Takahashi Y."/>
            <person name="Nakagawa K."/>
            <person name="Okumura K."/>
            <person name="Nagase T."/>
            <person name="Nomura N."/>
            <person name="Kikuchi H."/>
            <person name="Masuho Y."/>
            <person name="Yamashita R."/>
            <person name="Nakai K."/>
            <person name="Yada T."/>
            <person name="Nakamura Y."/>
            <person name="Ohara O."/>
            <person name="Isogai T."/>
            <person name="Sugano S."/>
        </authorList>
    </citation>
    <scope>NUCLEOTIDE SEQUENCE [LARGE SCALE MRNA] (ISOFORMS 2; 3; 4 AND 5)</scope>
    <source>
        <tissue>Testis</tissue>
    </source>
</reference>
<reference key="2">
    <citation type="journal article" date="2007" name="BMC Genomics">
        <title>The full-ORF clone resource of the German cDNA consortium.</title>
        <authorList>
            <person name="Bechtel S."/>
            <person name="Rosenfelder H."/>
            <person name="Duda A."/>
            <person name="Schmidt C.P."/>
            <person name="Ernst U."/>
            <person name="Wellenreuther R."/>
            <person name="Mehrle A."/>
            <person name="Schuster C."/>
            <person name="Bahr A."/>
            <person name="Bloecker H."/>
            <person name="Heubner D."/>
            <person name="Hoerlein A."/>
            <person name="Michel G."/>
            <person name="Wedler H."/>
            <person name="Koehrer K."/>
            <person name="Ottenwaelder B."/>
            <person name="Poustka A."/>
            <person name="Wiemann S."/>
            <person name="Schupp I."/>
        </authorList>
    </citation>
    <scope>NUCLEOTIDE SEQUENCE [LARGE SCALE MRNA] (ISOFORM 2)</scope>
    <source>
        <tissue>Fetal kidney</tissue>
    </source>
</reference>
<reference key="3">
    <citation type="journal article" date="2005" name="Nature">
        <title>The DNA sequence of the human X chromosome.</title>
        <authorList>
            <person name="Ross M.T."/>
            <person name="Grafham D.V."/>
            <person name="Coffey A.J."/>
            <person name="Scherer S."/>
            <person name="McLay K."/>
            <person name="Muzny D."/>
            <person name="Platzer M."/>
            <person name="Howell G.R."/>
            <person name="Burrows C."/>
            <person name="Bird C.P."/>
            <person name="Frankish A."/>
            <person name="Lovell F.L."/>
            <person name="Howe K.L."/>
            <person name="Ashurst J.L."/>
            <person name="Fulton R.S."/>
            <person name="Sudbrak R."/>
            <person name="Wen G."/>
            <person name="Jones M.C."/>
            <person name="Hurles M.E."/>
            <person name="Andrews T.D."/>
            <person name="Scott C.E."/>
            <person name="Searle S."/>
            <person name="Ramser J."/>
            <person name="Whittaker A."/>
            <person name="Deadman R."/>
            <person name="Carter N.P."/>
            <person name="Hunt S.E."/>
            <person name="Chen R."/>
            <person name="Cree A."/>
            <person name="Gunaratne P."/>
            <person name="Havlak P."/>
            <person name="Hodgson A."/>
            <person name="Metzker M.L."/>
            <person name="Richards S."/>
            <person name="Scott G."/>
            <person name="Steffen D."/>
            <person name="Sodergren E."/>
            <person name="Wheeler D.A."/>
            <person name="Worley K.C."/>
            <person name="Ainscough R."/>
            <person name="Ambrose K.D."/>
            <person name="Ansari-Lari M.A."/>
            <person name="Aradhya S."/>
            <person name="Ashwell R.I."/>
            <person name="Babbage A.K."/>
            <person name="Bagguley C.L."/>
            <person name="Ballabio A."/>
            <person name="Banerjee R."/>
            <person name="Barker G.E."/>
            <person name="Barlow K.F."/>
            <person name="Barrett I.P."/>
            <person name="Bates K.N."/>
            <person name="Beare D.M."/>
            <person name="Beasley H."/>
            <person name="Beasley O."/>
            <person name="Beck A."/>
            <person name="Bethel G."/>
            <person name="Blechschmidt K."/>
            <person name="Brady N."/>
            <person name="Bray-Allen S."/>
            <person name="Bridgeman A.M."/>
            <person name="Brown A.J."/>
            <person name="Brown M.J."/>
            <person name="Bonnin D."/>
            <person name="Bruford E.A."/>
            <person name="Buhay C."/>
            <person name="Burch P."/>
            <person name="Burford D."/>
            <person name="Burgess J."/>
            <person name="Burrill W."/>
            <person name="Burton J."/>
            <person name="Bye J.M."/>
            <person name="Carder C."/>
            <person name="Carrel L."/>
            <person name="Chako J."/>
            <person name="Chapman J.C."/>
            <person name="Chavez D."/>
            <person name="Chen E."/>
            <person name="Chen G."/>
            <person name="Chen Y."/>
            <person name="Chen Z."/>
            <person name="Chinault C."/>
            <person name="Ciccodicola A."/>
            <person name="Clark S.Y."/>
            <person name="Clarke G."/>
            <person name="Clee C.M."/>
            <person name="Clegg S."/>
            <person name="Clerc-Blankenburg K."/>
            <person name="Clifford K."/>
            <person name="Cobley V."/>
            <person name="Cole C.G."/>
            <person name="Conquer J.S."/>
            <person name="Corby N."/>
            <person name="Connor R.E."/>
            <person name="David R."/>
            <person name="Davies J."/>
            <person name="Davis C."/>
            <person name="Davis J."/>
            <person name="Delgado O."/>
            <person name="Deshazo D."/>
            <person name="Dhami P."/>
            <person name="Ding Y."/>
            <person name="Dinh H."/>
            <person name="Dodsworth S."/>
            <person name="Draper H."/>
            <person name="Dugan-Rocha S."/>
            <person name="Dunham A."/>
            <person name="Dunn M."/>
            <person name="Durbin K.J."/>
            <person name="Dutta I."/>
            <person name="Eades T."/>
            <person name="Ellwood M."/>
            <person name="Emery-Cohen A."/>
            <person name="Errington H."/>
            <person name="Evans K.L."/>
            <person name="Faulkner L."/>
            <person name="Francis F."/>
            <person name="Frankland J."/>
            <person name="Fraser A.E."/>
            <person name="Galgoczy P."/>
            <person name="Gilbert J."/>
            <person name="Gill R."/>
            <person name="Gloeckner G."/>
            <person name="Gregory S.G."/>
            <person name="Gribble S."/>
            <person name="Griffiths C."/>
            <person name="Grocock R."/>
            <person name="Gu Y."/>
            <person name="Gwilliam R."/>
            <person name="Hamilton C."/>
            <person name="Hart E.A."/>
            <person name="Hawes A."/>
            <person name="Heath P.D."/>
            <person name="Heitmann K."/>
            <person name="Hennig S."/>
            <person name="Hernandez J."/>
            <person name="Hinzmann B."/>
            <person name="Ho S."/>
            <person name="Hoffs M."/>
            <person name="Howden P.J."/>
            <person name="Huckle E.J."/>
            <person name="Hume J."/>
            <person name="Hunt P.J."/>
            <person name="Hunt A.R."/>
            <person name="Isherwood J."/>
            <person name="Jacob L."/>
            <person name="Johnson D."/>
            <person name="Jones S."/>
            <person name="de Jong P.J."/>
            <person name="Joseph S.S."/>
            <person name="Keenan S."/>
            <person name="Kelly S."/>
            <person name="Kershaw J.K."/>
            <person name="Khan Z."/>
            <person name="Kioschis P."/>
            <person name="Klages S."/>
            <person name="Knights A.J."/>
            <person name="Kosiura A."/>
            <person name="Kovar-Smith C."/>
            <person name="Laird G.K."/>
            <person name="Langford C."/>
            <person name="Lawlor S."/>
            <person name="Leversha M."/>
            <person name="Lewis L."/>
            <person name="Liu W."/>
            <person name="Lloyd C."/>
            <person name="Lloyd D.M."/>
            <person name="Loulseged H."/>
            <person name="Loveland J.E."/>
            <person name="Lovell J.D."/>
            <person name="Lozado R."/>
            <person name="Lu J."/>
            <person name="Lyne R."/>
            <person name="Ma J."/>
            <person name="Maheshwari M."/>
            <person name="Matthews L.H."/>
            <person name="McDowall J."/>
            <person name="McLaren S."/>
            <person name="McMurray A."/>
            <person name="Meidl P."/>
            <person name="Meitinger T."/>
            <person name="Milne S."/>
            <person name="Miner G."/>
            <person name="Mistry S.L."/>
            <person name="Morgan M."/>
            <person name="Morris S."/>
            <person name="Mueller I."/>
            <person name="Mullikin J.C."/>
            <person name="Nguyen N."/>
            <person name="Nordsiek G."/>
            <person name="Nyakatura G."/>
            <person name="O'dell C.N."/>
            <person name="Okwuonu G."/>
            <person name="Palmer S."/>
            <person name="Pandian R."/>
            <person name="Parker D."/>
            <person name="Parrish J."/>
            <person name="Pasternak S."/>
            <person name="Patel D."/>
            <person name="Pearce A.V."/>
            <person name="Pearson D.M."/>
            <person name="Pelan S.E."/>
            <person name="Perez L."/>
            <person name="Porter K.M."/>
            <person name="Ramsey Y."/>
            <person name="Reichwald K."/>
            <person name="Rhodes S."/>
            <person name="Ridler K.A."/>
            <person name="Schlessinger D."/>
            <person name="Schueler M.G."/>
            <person name="Sehra H.K."/>
            <person name="Shaw-Smith C."/>
            <person name="Shen H."/>
            <person name="Sheridan E.M."/>
            <person name="Shownkeen R."/>
            <person name="Skuce C.D."/>
            <person name="Smith M.L."/>
            <person name="Sotheran E.C."/>
            <person name="Steingruber H.E."/>
            <person name="Steward C.A."/>
            <person name="Storey R."/>
            <person name="Swann R.M."/>
            <person name="Swarbreck D."/>
            <person name="Tabor P.E."/>
            <person name="Taudien S."/>
            <person name="Taylor T."/>
            <person name="Teague B."/>
            <person name="Thomas K."/>
            <person name="Thorpe A."/>
            <person name="Timms K."/>
            <person name="Tracey A."/>
            <person name="Trevanion S."/>
            <person name="Tromans A.C."/>
            <person name="d'Urso M."/>
            <person name="Verduzco D."/>
            <person name="Villasana D."/>
            <person name="Waldron L."/>
            <person name="Wall M."/>
            <person name="Wang Q."/>
            <person name="Warren J."/>
            <person name="Warry G.L."/>
            <person name="Wei X."/>
            <person name="West A."/>
            <person name="Whitehead S.L."/>
            <person name="Whiteley M.N."/>
            <person name="Wilkinson J.E."/>
            <person name="Willey D.L."/>
            <person name="Williams G."/>
            <person name="Williams L."/>
            <person name="Williamson A."/>
            <person name="Williamson H."/>
            <person name="Wilming L."/>
            <person name="Woodmansey R.L."/>
            <person name="Wray P.W."/>
            <person name="Yen J."/>
            <person name="Zhang J."/>
            <person name="Zhou J."/>
            <person name="Zoghbi H."/>
            <person name="Zorilla S."/>
            <person name="Buck D."/>
            <person name="Reinhardt R."/>
            <person name="Poustka A."/>
            <person name="Rosenthal A."/>
            <person name="Lehrach H."/>
            <person name="Meindl A."/>
            <person name="Minx P.J."/>
            <person name="Hillier L.W."/>
            <person name="Willard H.F."/>
            <person name="Wilson R.K."/>
            <person name="Waterston R.H."/>
            <person name="Rice C.M."/>
            <person name="Vaudin M."/>
            <person name="Coulson A."/>
            <person name="Nelson D.L."/>
            <person name="Weinstock G."/>
            <person name="Sulston J.E."/>
            <person name="Durbin R.M."/>
            <person name="Hubbard T."/>
            <person name="Gibbs R.A."/>
            <person name="Beck S."/>
            <person name="Rogers J."/>
            <person name="Bentley D.R."/>
        </authorList>
    </citation>
    <scope>NUCLEOTIDE SEQUENCE [LARGE SCALE GENOMIC DNA]</scope>
</reference>
<reference key="4">
    <citation type="submission" date="2005-09" db="EMBL/GenBank/DDBJ databases">
        <authorList>
            <person name="Mural R.J."/>
            <person name="Istrail S."/>
            <person name="Sutton G.G."/>
            <person name="Florea L."/>
            <person name="Halpern A.L."/>
            <person name="Mobarry C.M."/>
            <person name="Lippert R."/>
            <person name="Walenz B."/>
            <person name="Shatkay H."/>
            <person name="Dew I."/>
            <person name="Miller J.R."/>
            <person name="Flanigan M.J."/>
            <person name="Edwards N.J."/>
            <person name="Bolanos R."/>
            <person name="Fasulo D."/>
            <person name="Halldorsson B.V."/>
            <person name="Hannenhalli S."/>
            <person name="Turner R."/>
            <person name="Yooseph S."/>
            <person name="Lu F."/>
            <person name="Nusskern D.R."/>
            <person name="Shue B.C."/>
            <person name="Zheng X.H."/>
            <person name="Zhong F."/>
            <person name="Delcher A.L."/>
            <person name="Huson D.H."/>
            <person name="Kravitz S.A."/>
            <person name="Mouchard L."/>
            <person name="Reinert K."/>
            <person name="Remington K.A."/>
            <person name="Clark A.G."/>
            <person name="Waterman M.S."/>
            <person name="Eichler E.E."/>
            <person name="Adams M.D."/>
            <person name="Hunkapiller M.W."/>
            <person name="Myers E.W."/>
            <person name="Venter J.C."/>
        </authorList>
    </citation>
    <scope>NUCLEOTIDE SEQUENCE [LARGE SCALE GENOMIC DNA]</scope>
</reference>
<reference key="5">
    <citation type="journal article" date="2004" name="Genome Res.">
        <title>The status, quality, and expansion of the NIH full-length cDNA project: the Mammalian Gene Collection (MGC).</title>
        <authorList>
            <consortium name="The MGC Project Team"/>
        </authorList>
    </citation>
    <scope>NUCLEOTIDE SEQUENCE [LARGE SCALE MRNA] (ISOFORM 1)</scope>
    <source>
        <tissue>Pancreas</tissue>
        <tissue>Placenta</tissue>
        <tissue>Skin</tissue>
    </source>
</reference>
<reference key="6">
    <citation type="journal article" date="2006" name="Cell">
        <title>Global, in vivo, and site-specific phosphorylation dynamics in signaling networks.</title>
        <authorList>
            <person name="Olsen J.V."/>
            <person name="Blagoev B."/>
            <person name="Gnad F."/>
            <person name="Macek B."/>
            <person name="Kumar C."/>
            <person name="Mortensen P."/>
            <person name="Mann M."/>
        </authorList>
    </citation>
    <scope>IDENTIFICATION BY MASS SPECTROMETRY [LARGE SCALE ANALYSIS]</scope>
    <source>
        <tissue>Cervix carcinoma</tissue>
    </source>
</reference>
<reference key="7">
    <citation type="journal article" date="2006" name="Nat. Biotechnol.">
        <title>A probability-based approach for high-throughput protein phosphorylation analysis and site localization.</title>
        <authorList>
            <person name="Beausoleil S.A."/>
            <person name="Villen J."/>
            <person name="Gerber S.A."/>
            <person name="Rush J."/>
            <person name="Gygi S.P."/>
        </authorList>
    </citation>
    <scope>PHOSPHORYLATION [LARGE SCALE ANALYSIS] AT SER-115 AND SER-119</scope>
    <scope>IDENTIFICATION BY MASS SPECTROMETRY [LARGE SCALE ANALYSIS]</scope>
    <source>
        <tissue>Cervix carcinoma</tissue>
    </source>
</reference>
<reference key="8">
    <citation type="journal article" date="2008" name="J. Proteome Res.">
        <title>Combining protein-based IMAC, peptide-based IMAC, and MudPIT for efficient phosphoproteomic analysis.</title>
        <authorList>
            <person name="Cantin G.T."/>
            <person name="Yi W."/>
            <person name="Lu B."/>
            <person name="Park S.K."/>
            <person name="Xu T."/>
            <person name="Lee J.-D."/>
            <person name="Yates J.R. III"/>
        </authorList>
    </citation>
    <scope>PHOSPHORYLATION [LARGE SCALE ANALYSIS] AT SER-33 AND SER-115</scope>
    <scope>IDENTIFICATION BY MASS SPECTROMETRY [LARGE SCALE ANALYSIS]</scope>
    <source>
        <tissue>Cervix carcinoma</tissue>
    </source>
</reference>
<reference key="9">
    <citation type="journal article" date="2008" name="Proc. Natl. Acad. Sci. U.S.A.">
        <title>A quantitative atlas of mitotic phosphorylation.</title>
        <authorList>
            <person name="Dephoure N."/>
            <person name="Zhou C."/>
            <person name="Villen J."/>
            <person name="Beausoleil S.A."/>
            <person name="Bakalarski C.E."/>
            <person name="Elledge S.J."/>
            <person name="Gygi S.P."/>
        </authorList>
    </citation>
    <scope>PHOSPHORYLATION [LARGE SCALE ANALYSIS] AT THR-112; SER-115; SER-119; SER-137 AND SER-141</scope>
    <scope>IDENTIFICATION BY MASS SPECTROMETRY [LARGE SCALE ANALYSIS]</scope>
    <source>
        <tissue>Cervix carcinoma</tissue>
    </source>
</reference>
<reference key="10">
    <citation type="journal article" date="2009" name="Anal. Chem.">
        <title>Lys-N and trypsin cover complementary parts of the phosphoproteome in a refined SCX-based approach.</title>
        <authorList>
            <person name="Gauci S."/>
            <person name="Helbig A.O."/>
            <person name="Slijper M."/>
            <person name="Krijgsveld J."/>
            <person name="Heck A.J."/>
            <person name="Mohammed S."/>
        </authorList>
    </citation>
    <scope>IDENTIFICATION BY MASS SPECTROMETRY [LARGE SCALE ANALYSIS]</scope>
</reference>
<reference key="11">
    <citation type="journal article" date="2009" name="Sci. Signal.">
        <title>Quantitative phosphoproteomic analysis of T cell receptor signaling reveals system-wide modulation of protein-protein interactions.</title>
        <authorList>
            <person name="Mayya V."/>
            <person name="Lundgren D.H."/>
            <person name="Hwang S.-I."/>
            <person name="Rezaul K."/>
            <person name="Wu L."/>
            <person name="Eng J.K."/>
            <person name="Rodionov V."/>
            <person name="Han D.K."/>
        </authorList>
    </citation>
    <scope>PHOSPHORYLATION [LARGE SCALE ANALYSIS] AT SER-25; SER-115; SER-119; SER-137 AND SER-141</scope>
    <scope>IDENTIFICATION BY MASS SPECTROMETRY [LARGE SCALE ANALYSIS]</scope>
    <source>
        <tissue>Leukemic T-cell</tissue>
    </source>
</reference>
<reference key="12">
    <citation type="journal article" date="2010" name="Sci. Signal.">
        <title>Quantitative phosphoproteomics reveals widespread full phosphorylation site occupancy during mitosis.</title>
        <authorList>
            <person name="Olsen J.V."/>
            <person name="Vermeulen M."/>
            <person name="Santamaria A."/>
            <person name="Kumar C."/>
            <person name="Miller M.L."/>
            <person name="Jensen L.J."/>
            <person name="Gnad F."/>
            <person name="Cox J."/>
            <person name="Jensen T.S."/>
            <person name="Nigg E.A."/>
            <person name="Brunak S."/>
            <person name="Mann M."/>
        </authorList>
    </citation>
    <scope>PHOSPHORYLATION [LARGE SCALE ANALYSIS] AT SER-50; SER-58; SER-115; SER-137 AND SER-141</scope>
    <scope>PHOSPHORYLATION [LARGE SCALE ANALYSIS] AT SER-63 (ISOFORMS 3 AND 4)</scope>
    <scope>IDENTIFICATION BY MASS SPECTROMETRY [LARGE SCALE ANALYSIS]</scope>
    <source>
        <tissue>Cervix carcinoma</tissue>
    </source>
</reference>
<reference key="13">
    <citation type="journal article" date="2011" name="Sci. Signal.">
        <title>System-wide temporal characterization of the proteome and phosphoproteome of human embryonic stem cell differentiation.</title>
        <authorList>
            <person name="Rigbolt K.T."/>
            <person name="Prokhorova T.A."/>
            <person name="Akimov V."/>
            <person name="Henningsen J."/>
            <person name="Johansen P.T."/>
            <person name="Kratchmarova I."/>
            <person name="Kassem M."/>
            <person name="Mann M."/>
            <person name="Olsen J.V."/>
            <person name="Blagoev B."/>
        </authorList>
    </citation>
    <scope>PHOSPHORYLATION [LARGE SCALE ANALYSIS] AT SER-50; SER-115 AND SER-119</scope>
    <scope>IDENTIFICATION BY MASS SPECTROMETRY [LARGE SCALE ANALYSIS]</scope>
</reference>
<reference key="14">
    <citation type="journal article" date="2012" name="Proc. Natl. Acad. Sci. U.S.A.">
        <title>N-terminal acetylome analyses and functional insights of the N-terminal acetyltransferase NatB.</title>
        <authorList>
            <person name="Van Damme P."/>
            <person name="Lasa M."/>
            <person name="Polevoda B."/>
            <person name="Gazquez C."/>
            <person name="Elosegui-Artola A."/>
            <person name="Kim D.S."/>
            <person name="De Juan-Pardo E."/>
            <person name="Demeyer K."/>
            <person name="Hole K."/>
            <person name="Larrea E."/>
            <person name="Timmerman E."/>
            <person name="Prieto J."/>
            <person name="Arnesen T."/>
            <person name="Sherman F."/>
            <person name="Gevaert K."/>
            <person name="Aldabe R."/>
        </authorList>
    </citation>
    <scope>ACETYLATION [LARGE SCALE ANALYSIS] AT ALA-2</scope>
    <scope>CLEAVAGE OF INITIATOR METHIONINE [LARGE SCALE ANALYSIS]</scope>
    <scope>IDENTIFICATION BY MASS SPECTROMETRY [LARGE SCALE ANALYSIS]</scope>
</reference>
<reference key="15">
    <citation type="journal article" date="2013" name="J. Proteome Res.">
        <title>Toward a comprehensive characterization of a human cancer cell phosphoproteome.</title>
        <authorList>
            <person name="Zhou H."/>
            <person name="Di Palma S."/>
            <person name="Preisinger C."/>
            <person name="Peng M."/>
            <person name="Polat A.N."/>
            <person name="Heck A.J."/>
            <person name="Mohammed S."/>
        </authorList>
    </citation>
    <scope>PHOSPHORYLATION [LARGE SCALE ANALYSIS] AT SER-50; SER-58; SER-115; SER-119; SER-137 AND SER-141</scope>
    <scope>IDENTIFICATION BY MASS SPECTROMETRY [LARGE SCALE ANALYSIS]</scope>
    <source>
        <tissue>Cervix carcinoma</tissue>
        <tissue>Erythroleukemia</tissue>
    </source>
</reference>
<reference key="16">
    <citation type="journal article" date="2014" name="Mol. Cell. Proteomics">
        <title>Immunoaffinity enrichment and mass spectrometry analysis of protein methylation.</title>
        <authorList>
            <person name="Guo A."/>
            <person name="Gu H."/>
            <person name="Zhou J."/>
            <person name="Mulhern D."/>
            <person name="Wang Y."/>
            <person name="Lee K.A."/>
            <person name="Yang V."/>
            <person name="Aguiar M."/>
            <person name="Kornhauser J."/>
            <person name="Jia X."/>
            <person name="Ren J."/>
            <person name="Beausoleil S.A."/>
            <person name="Silva J.C."/>
            <person name="Vemulapalli V."/>
            <person name="Bedford M.T."/>
            <person name="Comb M.J."/>
        </authorList>
    </citation>
    <scope>METHYLATION [LARGE SCALE ANALYSIS] AT ARG-122</scope>
    <scope>IDENTIFICATION BY MASS SPECTROMETRY [LARGE SCALE ANALYSIS]</scope>
    <source>
        <tissue>Colon carcinoma</tissue>
    </source>
</reference>
<keyword id="KW-0007">Acetylation</keyword>
<keyword id="KW-0025">Alternative splicing</keyword>
<keyword id="KW-0488">Methylation</keyword>
<keyword id="KW-0597">Phosphoprotein</keyword>
<keyword id="KW-1267">Proteomics identification</keyword>
<keyword id="KW-1185">Reference proteome</keyword>
<sequence length="247" mass="26928">MAQEKMELDLEPDTSYGGTLRRSSSAPLIHGLSDLSQVFQPYTLRTRRNSTTIMSRHSLEEGLDMVNRETAHEREMQTAMQISQSWDESLSLSDSDFDKPEKLYSPKRIDFTPVSPAPSPTRGFGKMFVSSSGLPPSPVPSPRRFSRRSQSPVKCIRPSVLGPLKRKGEMETESQPKRLFQGTTNMLSPDAAQLSDLSSCSDILDGSSSSSGLSSDPLAKGSATAESPVACSNSCSSFILMDDLSPK</sequence>
<feature type="initiator methionine" description="Removed" evidence="12">
    <location>
        <position position="1"/>
    </location>
</feature>
<feature type="chain" id="PRO_0000254545" description="PABIR family member 2">
    <location>
        <begin position="2"/>
        <end position="247"/>
    </location>
</feature>
<feature type="region of interest" description="Disordered" evidence="1">
    <location>
        <begin position="1"/>
        <end position="23"/>
    </location>
</feature>
<feature type="region of interest" description="Disordered" evidence="1">
    <location>
        <begin position="82"/>
        <end position="104"/>
    </location>
</feature>
<feature type="region of interest" description="Disordered" evidence="1">
    <location>
        <begin position="129"/>
        <end position="152"/>
    </location>
</feature>
<feature type="region of interest" description="Disordered" evidence="1">
    <location>
        <begin position="158"/>
        <end position="177"/>
    </location>
</feature>
<feature type="region of interest" description="Disordered" evidence="1">
    <location>
        <begin position="202"/>
        <end position="230"/>
    </location>
</feature>
<feature type="compositionally biased region" description="Low complexity" evidence="1">
    <location>
        <begin position="83"/>
        <end position="94"/>
    </location>
</feature>
<feature type="compositionally biased region" description="Basic and acidic residues" evidence="1">
    <location>
        <begin position="166"/>
        <end position="176"/>
    </location>
</feature>
<feature type="compositionally biased region" description="Low complexity" evidence="1">
    <location>
        <begin position="202"/>
        <end position="216"/>
    </location>
</feature>
<feature type="modified residue" description="N-acetylalanine" evidence="12">
    <location>
        <position position="2"/>
    </location>
</feature>
<feature type="modified residue" description="Phosphoserine" evidence="9">
    <location>
        <position position="25"/>
    </location>
</feature>
<feature type="modified residue" description="Phosphoserine" evidence="7">
    <location>
        <position position="33"/>
    </location>
</feature>
<feature type="modified residue" description="Phosphoserine" evidence="10 11 13">
    <location>
        <position position="50"/>
    </location>
</feature>
<feature type="modified residue" description="Phosphoserine" evidence="10 13">
    <location>
        <position position="58"/>
    </location>
</feature>
<feature type="modified residue" description="Phosphothreonine" evidence="8">
    <location>
        <position position="112"/>
    </location>
</feature>
<feature type="modified residue" description="Phosphoserine" evidence="6 7 8 9 10 11 13">
    <location>
        <position position="115"/>
    </location>
</feature>
<feature type="modified residue" description="Phosphoserine" evidence="6 8 9 11 13">
    <location>
        <position position="119"/>
    </location>
</feature>
<feature type="modified residue" description="Omega-N-methylarginine" evidence="14">
    <location>
        <position position="122"/>
    </location>
</feature>
<feature type="modified residue" description="Phosphoserine" evidence="8 9 10 13">
    <location>
        <position position="137"/>
    </location>
</feature>
<feature type="modified residue" description="Phosphoserine" evidence="8 9 10 13">
    <location>
        <position position="141"/>
    </location>
</feature>
<feature type="splice variant" id="VSP_021215" description="In isoform 5." evidence="2">
    <location>
        <begin position="1"/>
        <end position="53"/>
    </location>
</feature>
<feature type="splice variant" id="VSP_021216" description="In isoform 3 and isoform 4." evidence="2">
    <original>L</original>
    <variation>LLLSSSPNRIPSSRLHQIKR</variation>
    <location>
        <position position="59"/>
    </location>
</feature>
<feature type="splice variant" id="VSP_021217" description="In isoform 2 and isoform 5." evidence="2 3">
    <original>S</original>
    <variation>SS</variation>
    <location>
        <position position="146"/>
    </location>
</feature>
<feature type="splice variant" id="VSP_021218" description="In isoform 4 and isoform 5." evidence="2">
    <original>CSDILDGSSSSSGLSSDPLAKGSATAESPVACSNSCSSFILMDDLSPK</original>
    <variation>WWCYQGEEIPALTRCVEHLQMNE</variation>
    <location>
        <begin position="200"/>
        <end position="247"/>
    </location>
</feature>
<feature type="modified residue" description="Phosphoserine" evidence="10">
    <location sequence="Q7Z309-3">
        <position position="63"/>
    </location>
</feature>
<feature type="modified residue" description="Phosphoserine" evidence="10">
    <location sequence="Q7Z309-4">
        <position position="63"/>
    </location>
</feature>
<gene>
    <name evidence="5" type="primary">PABIR2</name>
    <name type="synonym">FAM122B</name>
</gene>
<comment type="alternative products">
    <event type="alternative splicing"/>
    <isoform>
        <id>Q7Z309-1</id>
        <name>1</name>
        <sequence type="displayed"/>
    </isoform>
    <isoform>
        <id>Q7Z309-2</id>
        <name>2</name>
        <sequence type="described" ref="VSP_021217"/>
    </isoform>
    <isoform>
        <id>Q7Z309-3</id>
        <name>3</name>
        <sequence type="described" ref="VSP_021216"/>
    </isoform>
    <isoform>
        <id>Q7Z309-4</id>
        <name>4</name>
        <sequence type="described" ref="VSP_021216 VSP_021218"/>
    </isoform>
    <isoform>
        <id>Q7Z309-5</id>
        <name>5</name>
        <sequence type="described" ref="VSP_021215 VSP_021217 VSP_021218"/>
    </isoform>
</comment>
<comment type="PTM">
    <text>Isoform 3 and isoform 4 are phosphorylated on Ser-62 and Ser-64.</text>
</comment>
<comment type="similarity">
    <text evidence="4">Belongs to the FAM122 family.</text>
</comment>
<comment type="sequence caution" evidence="4">
    <conflict type="erroneous initiation">
        <sequence resource="EMBL-CDS" id="AAH32419"/>
    </conflict>
</comment>
<dbReference type="EMBL" id="AK124650">
    <property type="protein sequence ID" value="BAC85918.1"/>
    <property type="molecule type" value="mRNA"/>
</dbReference>
<dbReference type="EMBL" id="AK124940">
    <property type="protein sequence ID" value="BAC85999.1"/>
    <property type="molecule type" value="mRNA"/>
</dbReference>
<dbReference type="EMBL" id="AK125991">
    <property type="protein sequence ID" value="BAC86380.1"/>
    <property type="molecule type" value="mRNA"/>
</dbReference>
<dbReference type="EMBL" id="AK292517">
    <property type="protein sequence ID" value="BAF85206.1"/>
    <property type="molecule type" value="mRNA"/>
</dbReference>
<dbReference type="EMBL" id="BX538218">
    <property type="protein sequence ID" value="CAD98073.1"/>
    <property type="molecule type" value="mRNA"/>
</dbReference>
<dbReference type="EMBL" id="AL672032">
    <property type="status" value="NOT_ANNOTATED_CDS"/>
    <property type="molecule type" value="Genomic_DNA"/>
</dbReference>
<dbReference type="EMBL" id="AL691477">
    <property type="status" value="NOT_ANNOTATED_CDS"/>
    <property type="molecule type" value="Genomic_DNA"/>
</dbReference>
<dbReference type="EMBL" id="CH471107">
    <property type="protein sequence ID" value="EAX11751.1"/>
    <property type="molecule type" value="Genomic_DNA"/>
</dbReference>
<dbReference type="EMBL" id="BC019221">
    <property type="protein sequence ID" value="AAH19221.1"/>
    <property type="molecule type" value="mRNA"/>
</dbReference>
<dbReference type="EMBL" id="BC032419">
    <property type="protein sequence ID" value="AAH32419.1"/>
    <property type="status" value="ALT_INIT"/>
    <property type="molecule type" value="mRNA"/>
</dbReference>
<dbReference type="EMBL" id="BC110846">
    <property type="protein sequence ID" value="AAI10847.1"/>
    <property type="molecule type" value="mRNA"/>
</dbReference>
<dbReference type="CCDS" id="CCDS14643.1">
    <molecule id="Q7Z309-2"/>
</dbReference>
<dbReference type="CCDS" id="CCDS55497.1">
    <molecule id="Q7Z309-1"/>
</dbReference>
<dbReference type="CCDS" id="CCDS55498.1">
    <molecule id="Q7Z309-4"/>
</dbReference>
<dbReference type="CCDS" id="CCDS55499.1">
    <molecule id="Q7Z309-3"/>
</dbReference>
<dbReference type="RefSeq" id="NP_001160071.1">
    <molecule id="Q7Z309-1"/>
    <property type="nucleotide sequence ID" value="NM_001166599.3"/>
</dbReference>
<dbReference type="RefSeq" id="NP_001160072.1">
    <molecule id="Q7Z309-4"/>
    <property type="nucleotide sequence ID" value="NM_001166600.3"/>
</dbReference>
<dbReference type="RefSeq" id="NP_001164227.1">
    <molecule id="Q7Z309-3"/>
    <property type="nucleotide sequence ID" value="NM_001170756.1"/>
</dbReference>
<dbReference type="RefSeq" id="NP_001164228.1">
    <property type="nucleotide sequence ID" value="NM_001170757.1"/>
</dbReference>
<dbReference type="RefSeq" id="NP_660327.2">
    <molecule id="Q7Z309-2"/>
    <property type="nucleotide sequence ID" value="NM_145284.5"/>
</dbReference>
<dbReference type="RefSeq" id="XP_011529595.1">
    <property type="nucleotide sequence ID" value="XM_011531293.1"/>
</dbReference>
<dbReference type="RefSeq" id="XP_047297832.1">
    <molecule id="Q7Z309-4"/>
    <property type="nucleotide sequence ID" value="XM_047441876.1"/>
</dbReference>
<dbReference type="RefSeq" id="XP_054182548.1">
    <molecule id="Q7Z309-4"/>
    <property type="nucleotide sequence ID" value="XM_054326573.1"/>
</dbReference>
<dbReference type="SMR" id="Q7Z309"/>
<dbReference type="BioGRID" id="127730">
    <property type="interactions" value="48"/>
</dbReference>
<dbReference type="FunCoup" id="Q7Z309">
    <property type="interactions" value="1139"/>
</dbReference>
<dbReference type="IntAct" id="Q7Z309">
    <property type="interactions" value="35"/>
</dbReference>
<dbReference type="MINT" id="Q7Z309"/>
<dbReference type="STRING" id="9606.ENSP00000487221"/>
<dbReference type="GlyGen" id="Q7Z309">
    <property type="glycosylation" value="5 sites, 1 N-linked glycan (1 site), 1 O-linked glycan (3 sites)"/>
</dbReference>
<dbReference type="iPTMnet" id="Q7Z309"/>
<dbReference type="PhosphoSitePlus" id="Q7Z309"/>
<dbReference type="BioMuta" id="FAM122B"/>
<dbReference type="jPOST" id="Q7Z309"/>
<dbReference type="MassIVE" id="Q7Z309"/>
<dbReference type="PaxDb" id="9606-ENSP00000419592"/>
<dbReference type="PeptideAtlas" id="Q7Z309"/>
<dbReference type="ProteomicsDB" id="68995">
    <molecule id="Q7Z309-1"/>
</dbReference>
<dbReference type="ProteomicsDB" id="68996">
    <molecule id="Q7Z309-2"/>
</dbReference>
<dbReference type="ProteomicsDB" id="68997">
    <molecule id="Q7Z309-3"/>
</dbReference>
<dbReference type="ProteomicsDB" id="68998">
    <molecule id="Q7Z309-4"/>
</dbReference>
<dbReference type="ProteomicsDB" id="68999">
    <molecule id="Q7Z309-5"/>
</dbReference>
<dbReference type="Antibodypedia" id="425">
    <property type="antibodies" value="56 antibodies from 15 providers"/>
</dbReference>
<dbReference type="DNASU" id="159090"/>
<dbReference type="Ensembl" id="ENST00000298090.10">
    <molecule id="Q7Z309-4"/>
    <property type="protein sequence ID" value="ENSP00000298090.6"/>
    <property type="gene ID" value="ENSG00000156504.17"/>
</dbReference>
<dbReference type="Ensembl" id="ENST00000370790.5">
    <molecule id="Q7Z309-1"/>
    <property type="protein sequence ID" value="ENSP00000359826.1"/>
    <property type="gene ID" value="ENSG00000156504.17"/>
</dbReference>
<dbReference type="Ensembl" id="ENST00000486347.5">
    <molecule id="Q7Z309-2"/>
    <property type="protein sequence ID" value="ENSP00000419592.1"/>
    <property type="gene ID" value="ENSG00000156504.17"/>
</dbReference>
<dbReference type="Ensembl" id="ENST00000493333.5">
    <molecule id="Q7Z309-3"/>
    <property type="protein sequence ID" value="ENSP00000487221.1"/>
    <property type="gene ID" value="ENSG00000156504.17"/>
</dbReference>
<dbReference type="GeneID" id="159090"/>
<dbReference type="KEGG" id="hsa:159090"/>
<dbReference type="UCSC" id="uc004exr.4">
    <molecule id="Q7Z309-1"/>
    <property type="organism name" value="human"/>
</dbReference>
<dbReference type="AGR" id="HGNC:30490"/>
<dbReference type="CTD" id="159090"/>
<dbReference type="GeneCards" id="PABIR2"/>
<dbReference type="HGNC" id="HGNC:30490">
    <property type="gene designation" value="PABIR2"/>
</dbReference>
<dbReference type="HPA" id="ENSG00000156504">
    <property type="expression patterns" value="Low tissue specificity"/>
</dbReference>
<dbReference type="neXtProt" id="NX_Q7Z309"/>
<dbReference type="OpenTargets" id="ENSG00000156504"/>
<dbReference type="PharmGKB" id="PA128394763"/>
<dbReference type="VEuPathDB" id="HostDB:ENSG00000156504"/>
<dbReference type="eggNOG" id="ENOG502QTCH">
    <property type="taxonomic scope" value="Eukaryota"/>
</dbReference>
<dbReference type="GeneTree" id="ENSGT00390000015476"/>
<dbReference type="HOGENOM" id="CLU_083344_0_0_1"/>
<dbReference type="InParanoid" id="Q7Z309"/>
<dbReference type="OrthoDB" id="10036177at2759"/>
<dbReference type="PAN-GO" id="Q7Z309">
    <property type="GO annotations" value="0 GO annotations based on evolutionary models"/>
</dbReference>
<dbReference type="PhylomeDB" id="Q7Z309"/>
<dbReference type="TreeFam" id="TF330808"/>
<dbReference type="PathwayCommons" id="Q7Z309"/>
<dbReference type="SignaLink" id="Q7Z309"/>
<dbReference type="BioGRID-ORCS" id="159090">
    <property type="hits" value="12 hits in 783 CRISPR screens"/>
</dbReference>
<dbReference type="ChiTaRS" id="FAM122B">
    <property type="organism name" value="human"/>
</dbReference>
<dbReference type="GeneWiki" id="FAM122B"/>
<dbReference type="GenomeRNAi" id="159090"/>
<dbReference type="Pharos" id="Q7Z309">
    <property type="development level" value="Tdark"/>
</dbReference>
<dbReference type="PRO" id="PR:Q7Z309"/>
<dbReference type="Proteomes" id="UP000005640">
    <property type="component" value="Chromosome X"/>
</dbReference>
<dbReference type="RNAct" id="Q7Z309">
    <property type="molecule type" value="protein"/>
</dbReference>
<dbReference type="Bgee" id="ENSG00000156504">
    <property type="expression patterns" value="Expressed in endothelial cell and 185 other cell types or tissues"/>
</dbReference>
<dbReference type="ExpressionAtlas" id="Q7Z309">
    <property type="expression patterns" value="baseline and differential"/>
</dbReference>
<dbReference type="GO" id="GO:0004865">
    <property type="term" value="F:protein serine/threonine phosphatase inhibitor activity"/>
    <property type="evidence" value="ECO:0007669"/>
    <property type="project" value="InterPro"/>
</dbReference>
<dbReference type="InterPro" id="IPR026716">
    <property type="entry name" value="PBIR1/2/3"/>
</dbReference>
<dbReference type="PANTHER" id="PTHR22227">
    <property type="entry name" value="FAMILY WITH SEQUENCE SIMILARITY 122B ISOFORM X1"/>
    <property type="match status" value="1"/>
</dbReference>
<dbReference type="PANTHER" id="PTHR22227:SF1">
    <property type="entry name" value="PABIR FAMILY MEMBER 2"/>
    <property type="match status" value="1"/>
</dbReference>
<proteinExistence type="evidence at protein level"/>